<sequence>MEEQLRVGGCSPDGGFTIVNEAPVADLLEFLHIDVELEHARDDREESARSKNVMRKQRNWERRLEVKKSKRKEEKLRKKLNRQDKDVSDAQLSKRVIKAITKERLEGARAAGLRLCVDLSMTEHLTHKEISRLAAQIRRLYGSNKKALQPFHVFLTELQEDSLLYKECVGMNDGFMHYLIDVTEESWFHLFPSEDVIYLTPDASEALESVEEDKIYILGGLVDETIHKKISYTKAKELGVRTARLPIDEYMVKKENPKNFHSKILAINQVFDILLTFRDTRDWTKALMAGIPPGKGFVLASAASKPLEET</sequence>
<reference key="1">
    <citation type="submission" date="2006-10" db="EMBL/GenBank/DDBJ databases">
        <authorList>
            <consortium name="NIH - Zebrafish Gene Collection (ZGC) project"/>
        </authorList>
    </citation>
    <scope>NUCLEOTIDE SEQUENCE [LARGE SCALE MRNA]</scope>
    <source>
        <tissue>Ovary</tissue>
    </source>
</reference>
<dbReference type="EC" id="2.1.1.221" evidence="1"/>
<dbReference type="EMBL" id="BC124659">
    <property type="protein sequence ID" value="AAI24660.1"/>
    <property type="molecule type" value="mRNA"/>
</dbReference>
<dbReference type="RefSeq" id="NP_001070749.1">
    <property type="nucleotide sequence ID" value="NM_001077281.1"/>
</dbReference>
<dbReference type="SMR" id="Q08BM0"/>
<dbReference type="FunCoup" id="Q08BM0">
    <property type="interactions" value="264"/>
</dbReference>
<dbReference type="STRING" id="7955.ENSDARP00000078938"/>
<dbReference type="PaxDb" id="7955-ENSDARP00000078938"/>
<dbReference type="GeneID" id="768135"/>
<dbReference type="KEGG" id="dre:768135"/>
<dbReference type="AGR" id="ZFIN:ZDB-GENE-061013-313"/>
<dbReference type="CTD" id="158234"/>
<dbReference type="ZFIN" id="ZDB-GENE-061013-313">
    <property type="gene designation" value="trmt10b"/>
</dbReference>
<dbReference type="eggNOG" id="KOG2967">
    <property type="taxonomic scope" value="Eukaryota"/>
</dbReference>
<dbReference type="InParanoid" id="Q08BM0"/>
<dbReference type="OrthoDB" id="278300at2759"/>
<dbReference type="PhylomeDB" id="Q08BM0"/>
<dbReference type="PRO" id="PR:Q08BM0"/>
<dbReference type="Proteomes" id="UP000000437">
    <property type="component" value="Chromosome 7"/>
</dbReference>
<dbReference type="GO" id="GO:0005654">
    <property type="term" value="C:nucleoplasm"/>
    <property type="evidence" value="ECO:0000318"/>
    <property type="project" value="GO_Central"/>
</dbReference>
<dbReference type="GO" id="GO:0005634">
    <property type="term" value="C:nucleus"/>
    <property type="evidence" value="ECO:0000318"/>
    <property type="project" value="GO_Central"/>
</dbReference>
<dbReference type="GO" id="GO:0052905">
    <property type="term" value="F:tRNA (guanosine(9)-N1)-methyltransferase activity"/>
    <property type="evidence" value="ECO:0007669"/>
    <property type="project" value="UniProtKB-EC"/>
</dbReference>
<dbReference type="GO" id="GO:0000049">
    <property type="term" value="F:tRNA binding"/>
    <property type="evidence" value="ECO:0000318"/>
    <property type="project" value="GO_Central"/>
</dbReference>
<dbReference type="GO" id="GO:0002939">
    <property type="term" value="P:tRNA N1-guanine methylation"/>
    <property type="evidence" value="ECO:0000318"/>
    <property type="project" value="GO_Central"/>
</dbReference>
<dbReference type="CDD" id="cd18100">
    <property type="entry name" value="Trm10euk_B"/>
    <property type="match status" value="1"/>
</dbReference>
<dbReference type="Gene3D" id="3.40.1280.30">
    <property type="match status" value="1"/>
</dbReference>
<dbReference type="InterPro" id="IPR028564">
    <property type="entry name" value="MT_TRM10-typ"/>
</dbReference>
<dbReference type="InterPro" id="IPR038459">
    <property type="entry name" value="MT_TRM10-typ_sf"/>
</dbReference>
<dbReference type="InterPro" id="IPR047911">
    <property type="entry name" value="Trm10_B_MTase_dom"/>
</dbReference>
<dbReference type="InterPro" id="IPR007356">
    <property type="entry name" value="tRNA_m1G_MeTrfase_euk"/>
</dbReference>
<dbReference type="InterPro" id="IPR016009">
    <property type="entry name" value="tRNA_MeTrfase_TRMD/TRM10"/>
</dbReference>
<dbReference type="PANTHER" id="PTHR13563">
    <property type="entry name" value="TRNA (GUANINE-9-) METHYLTRANSFERASE"/>
    <property type="match status" value="1"/>
</dbReference>
<dbReference type="PANTHER" id="PTHR13563:SF19">
    <property type="entry name" value="TRNA METHYLTRANSFERASE 10 HOMOLOG B"/>
    <property type="match status" value="1"/>
</dbReference>
<dbReference type="Pfam" id="PF01746">
    <property type="entry name" value="tRNA_m1G_MT"/>
    <property type="match status" value="1"/>
</dbReference>
<dbReference type="PROSITE" id="PS51675">
    <property type="entry name" value="SAM_MT_TRM10"/>
    <property type="match status" value="1"/>
</dbReference>
<accession>Q08BM0</accession>
<organism>
    <name type="scientific">Danio rerio</name>
    <name type="common">Zebrafish</name>
    <name type="synonym">Brachydanio rerio</name>
    <dbReference type="NCBI Taxonomy" id="7955"/>
    <lineage>
        <taxon>Eukaryota</taxon>
        <taxon>Metazoa</taxon>
        <taxon>Chordata</taxon>
        <taxon>Craniata</taxon>
        <taxon>Vertebrata</taxon>
        <taxon>Euteleostomi</taxon>
        <taxon>Actinopterygii</taxon>
        <taxon>Neopterygii</taxon>
        <taxon>Teleostei</taxon>
        <taxon>Ostariophysi</taxon>
        <taxon>Cypriniformes</taxon>
        <taxon>Danionidae</taxon>
        <taxon>Danioninae</taxon>
        <taxon>Danio</taxon>
    </lineage>
</organism>
<proteinExistence type="evidence at transcript level"/>
<keyword id="KW-0175">Coiled coil</keyword>
<keyword id="KW-0489">Methyltransferase</keyword>
<keyword id="KW-1185">Reference proteome</keyword>
<keyword id="KW-0949">S-adenosyl-L-methionine</keyword>
<keyword id="KW-0808">Transferase</keyword>
<name>TM10B_DANRE</name>
<evidence type="ECO:0000250" key="1">
    <source>
        <dbReference type="UniProtKB" id="Q6PF06"/>
    </source>
</evidence>
<evidence type="ECO:0000255" key="2"/>
<evidence type="ECO:0000255" key="3">
    <source>
        <dbReference type="PROSITE-ProRule" id="PRU01012"/>
    </source>
</evidence>
<feature type="chain" id="PRO_0000311324" description="tRNA methyltransferase 10 homolog B">
    <location>
        <begin position="1"/>
        <end position="310"/>
    </location>
</feature>
<feature type="domain" description="SAM-dependent MTase TRM10-type" evidence="3">
    <location>
        <begin position="101"/>
        <end position="298"/>
    </location>
</feature>
<feature type="coiled-coil region" evidence="2">
    <location>
        <begin position="55"/>
        <end position="94"/>
    </location>
</feature>
<comment type="function">
    <text evidence="1">S-adenosyl-L-methionine-dependent guanine N(1)-methyltransferase that catalyzes the formation of N(1)-methylguanine at position 9 (m1G9) in tRNAs. Probably not able to catalyze formation of N(1)-methyladenine at position 9 (m1A9) in tRNAs.</text>
</comment>
<comment type="catalytic activity">
    <reaction evidence="1">
        <text>guanosine(9) in tRNA + S-adenosyl-L-methionine = N(1)-methylguanosine(9) in tRNA + S-adenosyl-L-homocysteine + H(+)</text>
        <dbReference type="Rhea" id="RHEA:43156"/>
        <dbReference type="Rhea" id="RHEA-COMP:10367"/>
        <dbReference type="Rhea" id="RHEA-COMP:10368"/>
        <dbReference type="ChEBI" id="CHEBI:15378"/>
        <dbReference type="ChEBI" id="CHEBI:57856"/>
        <dbReference type="ChEBI" id="CHEBI:59789"/>
        <dbReference type="ChEBI" id="CHEBI:73542"/>
        <dbReference type="ChEBI" id="CHEBI:74269"/>
        <dbReference type="EC" id="2.1.1.221"/>
    </reaction>
</comment>
<comment type="similarity">
    <text evidence="3">Belongs to the class IV-like SAM-binding methyltransferase superfamily. TRM10 family.</text>
</comment>
<protein>
    <recommendedName>
        <fullName>tRNA methyltransferase 10 homolog B</fullName>
        <ecNumber evidence="1">2.1.1.221</ecNumber>
    </recommendedName>
    <alternativeName>
        <fullName>RNA (guanine-9-)-methyltransferase domain-containing protein 3</fullName>
    </alternativeName>
    <alternativeName>
        <fullName>tRNA (guanine(9)-N(1))-methyltransferase TRMT10B</fullName>
    </alternativeName>
</protein>
<gene>
    <name type="primary">trmt10b</name>
    <name type="synonym">rg9mtd3</name>
    <name type="ORF">zgc:153341</name>
</gene>